<gene>
    <name type="ordered locus">SPCG_0344</name>
</gene>
<comment type="similarity">
    <text evidence="1">Belongs to the UPF0371 family.</text>
</comment>
<reference key="1">
    <citation type="journal article" date="2009" name="BMC Genomics">
        <title>Genome evolution driven by host adaptations results in a more virulent and antimicrobial-resistant Streptococcus pneumoniae serotype 14.</title>
        <authorList>
            <person name="Ding F."/>
            <person name="Tang P."/>
            <person name="Hsu M.-H."/>
            <person name="Cui P."/>
            <person name="Hu S."/>
            <person name="Yu J."/>
            <person name="Chiu C.-H."/>
        </authorList>
    </citation>
    <scope>NUCLEOTIDE SEQUENCE [LARGE SCALE GENOMIC DNA]</scope>
    <source>
        <strain>CGSP14</strain>
    </source>
</reference>
<dbReference type="EMBL" id="CP001033">
    <property type="protein sequence ID" value="ACB89596.1"/>
    <property type="molecule type" value="Genomic_DNA"/>
</dbReference>
<dbReference type="RefSeq" id="WP_000743617.1">
    <property type="nucleotide sequence ID" value="NC_010582.1"/>
</dbReference>
<dbReference type="SMR" id="B2ISQ9"/>
<dbReference type="KEGG" id="spw:SPCG_0344"/>
<dbReference type="HOGENOM" id="CLU_046981_0_0_9"/>
<dbReference type="Gene3D" id="1.20.1570.10">
    <property type="entry name" value="dip2346 domain like"/>
    <property type="match status" value="1"/>
</dbReference>
<dbReference type="Gene3D" id="3.10.630.10">
    <property type="entry name" value="dip2346 domain like"/>
    <property type="match status" value="1"/>
</dbReference>
<dbReference type="Gene3D" id="3.40.140.40">
    <property type="entry name" value="Domain of unknown function (DUF1846), C-terminal subdomain"/>
    <property type="match status" value="1"/>
</dbReference>
<dbReference type="HAMAP" id="MF_01567">
    <property type="entry name" value="UPF0371"/>
    <property type="match status" value="1"/>
</dbReference>
<dbReference type="InterPro" id="IPR014999">
    <property type="entry name" value="DUF1846"/>
</dbReference>
<dbReference type="InterPro" id="IPR048441">
    <property type="entry name" value="DUF1846_C"/>
</dbReference>
<dbReference type="InterPro" id="IPR048496">
    <property type="entry name" value="DUF1846_N"/>
</dbReference>
<dbReference type="NCBIfam" id="NF010184">
    <property type="entry name" value="PRK13663.1"/>
    <property type="match status" value="1"/>
</dbReference>
<dbReference type="Pfam" id="PF08903">
    <property type="entry name" value="DUF1846"/>
    <property type="match status" value="1"/>
</dbReference>
<dbReference type="Pfam" id="PF20921">
    <property type="entry name" value="DUF1846_C"/>
    <property type="match status" value="1"/>
</dbReference>
<dbReference type="PIRSF" id="PIRSF033132">
    <property type="entry name" value="DUF1846"/>
    <property type="match status" value="1"/>
</dbReference>
<protein>
    <recommendedName>
        <fullName evidence="1">UPF0371 protein SPCG_0344</fullName>
    </recommendedName>
</protein>
<sequence length="494" mass="55081">MKKQAFSSEQYLNLQRDHILERINQFDGKLYLEFGGKMLEDFHAARVLPGYEPDNKIKLLQELKEQVEVVIAINASNIEHSKARGDLGISYDQEVLRLIDKFNELGIFVGSVVITQYAGQPAADAFRNQLEKNGIDSYLHYPIKGYPTDMDHIISPEGMGKNDYIKTSRNLIVVTAPGPGSGKLATCMSNMYHDQINGIKSGYAKFETFPVWNLPLHHPVNLAYEAATADLDDVNMIDPFHLQTYGETTVNYNRDIEIFPVLKRMLERILGKSPYASPTDMGVNMVGFAITDDEAAVEASKQEIIRRYYQTVLDFKAEKVSEAAVKKIELLMNDLGITPADRKVAVVARQKAEETGGPALAFELPNGEIVTGKNSELFGPTAAALINAIKKSADIAKEVKLIEPEVVKPIQGLKIDHLGSRNPRLHSNEILIALAITATENPDAARAMEELGNLKGSEAHSTIILTDEDKNVLRKLGINVTFDPYYQYDRLYRK</sequence>
<organism>
    <name type="scientific">Streptococcus pneumoniae (strain CGSP14)</name>
    <dbReference type="NCBI Taxonomy" id="516950"/>
    <lineage>
        <taxon>Bacteria</taxon>
        <taxon>Bacillati</taxon>
        <taxon>Bacillota</taxon>
        <taxon>Bacilli</taxon>
        <taxon>Lactobacillales</taxon>
        <taxon>Streptococcaceae</taxon>
        <taxon>Streptococcus</taxon>
    </lineage>
</organism>
<accession>B2ISQ9</accession>
<proteinExistence type="inferred from homology"/>
<name>Y344_STRPS</name>
<evidence type="ECO:0000255" key="1">
    <source>
        <dbReference type="HAMAP-Rule" id="MF_01567"/>
    </source>
</evidence>
<feature type="chain" id="PRO_1000199745" description="UPF0371 protein SPCG_0344">
    <location>
        <begin position="1"/>
        <end position="494"/>
    </location>
</feature>